<feature type="chain" id="PRO_0000354975" description="Large ribosomal subunit protein uL16-like">
    <location>
        <begin position="1"/>
        <end position="214"/>
    </location>
</feature>
<dbReference type="EMBL" id="AC125344">
    <property type="status" value="NOT_ANNOTATED_CDS"/>
    <property type="molecule type" value="Genomic_DNA"/>
</dbReference>
<dbReference type="EMBL" id="BC052145">
    <property type="status" value="NOT_ANNOTATED_CDS"/>
    <property type="molecule type" value="mRNA"/>
</dbReference>
<dbReference type="CCDS" id="CCDS49076.1"/>
<dbReference type="RefSeq" id="NP_001156405.1">
    <property type="nucleotide sequence ID" value="NM_001162933.1"/>
</dbReference>
<dbReference type="PDB" id="7CPV">
    <property type="method" value="EM"/>
    <property type="resolution" value="3.03 A"/>
    <property type="chains" value="LI=1-214"/>
</dbReference>
<dbReference type="PDB" id="7LS1">
    <property type="method" value="EM"/>
    <property type="resolution" value="3.30 A"/>
    <property type="chains" value="D1=1-214"/>
</dbReference>
<dbReference type="PDB" id="7LS2">
    <property type="method" value="EM"/>
    <property type="resolution" value="3.10 A"/>
    <property type="chains" value="D1=1-214"/>
</dbReference>
<dbReference type="PDBsum" id="7CPV"/>
<dbReference type="PDBsum" id="7LS1"/>
<dbReference type="PDBsum" id="7LS2"/>
<dbReference type="EMDB" id="EMD-23500"/>
<dbReference type="EMDB" id="EMD-23501"/>
<dbReference type="EMDB" id="EMD-30433"/>
<dbReference type="SMR" id="P86048"/>
<dbReference type="BioGRID" id="231958">
    <property type="interactions" value="8"/>
</dbReference>
<dbReference type="ComplexPortal" id="CPX-7662">
    <property type="entry name" value="60S cytosolic large ribosomal subunit, testis-specific variant"/>
</dbReference>
<dbReference type="FunCoup" id="P86048">
    <property type="interactions" value="677"/>
</dbReference>
<dbReference type="IntAct" id="P86048">
    <property type="interactions" value="1"/>
</dbReference>
<dbReference type="STRING" id="10090.ENSMUSP00000100795"/>
<dbReference type="iPTMnet" id="P86048"/>
<dbReference type="PhosphoSitePlus" id="P86048"/>
<dbReference type="SwissPalm" id="P86048"/>
<dbReference type="jPOST" id="P86048"/>
<dbReference type="PaxDb" id="10090-ENSMUSP00000100795"/>
<dbReference type="PeptideAtlas" id="P86048"/>
<dbReference type="ProteomicsDB" id="253134"/>
<dbReference type="Pumba" id="P86048"/>
<dbReference type="Antibodypedia" id="23486">
    <property type="antibodies" value="139 antibodies from 23 providers"/>
</dbReference>
<dbReference type="Ensembl" id="ENSMUST00000081908.8">
    <property type="protein sequence ID" value="ENSMUSP00000100795.3"/>
    <property type="gene ID" value="ENSMUSG00000060499.8"/>
</dbReference>
<dbReference type="GeneID" id="238217"/>
<dbReference type="KEGG" id="mmu:238217"/>
<dbReference type="UCSC" id="uc011ymh.1">
    <property type="organism name" value="mouse"/>
</dbReference>
<dbReference type="AGR" id="MGI:3647985"/>
<dbReference type="CTD" id="140801"/>
<dbReference type="MGI" id="MGI:3647985">
    <property type="gene designation" value="Rpl10l"/>
</dbReference>
<dbReference type="VEuPathDB" id="HostDB:ENSMUSG00000060499"/>
<dbReference type="eggNOG" id="KOG0857">
    <property type="taxonomic scope" value="Eukaryota"/>
</dbReference>
<dbReference type="GeneTree" id="ENSGT00390000003897"/>
<dbReference type="HOGENOM" id="CLU_084051_0_0_1"/>
<dbReference type="InParanoid" id="P86048"/>
<dbReference type="OMA" id="GNHEIYR"/>
<dbReference type="OrthoDB" id="9543396at2759"/>
<dbReference type="PhylomeDB" id="P86048"/>
<dbReference type="TreeFam" id="TF300082"/>
<dbReference type="Reactome" id="R-MMU-156827">
    <property type="pathway name" value="L13a-mediated translational silencing of Ceruloplasmin expression"/>
</dbReference>
<dbReference type="Reactome" id="R-MMU-1799339">
    <property type="pathway name" value="SRP-dependent cotranslational protein targeting to membrane"/>
</dbReference>
<dbReference type="Reactome" id="R-MMU-6791226">
    <property type="pathway name" value="Major pathway of rRNA processing in the nucleolus and cytosol"/>
</dbReference>
<dbReference type="Reactome" id="R-MMU-72689">
    <property type="pathway name" value="Formation of a pool of free 40S subunits"/>
</dbReference>
<dbReference type="Reactome" id="R-MMU-72706">
    <property type="pathway name" value="GTP hydrolysis and joining of the 60S ribosomal subunit"/>
</dbReference>
<dbReference type="Reactome" id="R-MMU-975956">
    <property type="pathway name" value="Nonsense Mediated Decay (NMD) independent of the Exon Junction Complex (EJC)"/>
</dbReference>
<dbReference type="Reactome" id="R-MMU-975957">
    <property type="pathway name" value="Nonsense Mediated Decay (NMD) enhanced by the Exon Junction Complex (EJC)"/>
</dbReference>
<dbReference type="BioGRID-ORCS" id="238217">
    <property type="hits" value="0 hits in 75 CRISPR screens"/>
</dbReference>
<dbReference type="ChiTaRS" id="Rpl10l">
    <property type="organism name" value="mouse"/>
</dbReference>
<dbReference type="PRO" id="PR:P86048"/>
<dbReference type="Proteomes" id="UP000000589">
    <property type="component" value="Chromosome 12"/>
</dbReference>
<dbReference type="RNAct" id="P86048">
    <property type="molecule type" value="protein"/>
</dbReference>
<dbReference type="Bgee" id="ENSMUSG00000060499">
    <property type="expression patterns" value="Expressed in spermatocyte and 23 other cell types or tissues"/>
</dbReference>
<dbReference type="GO" id="GO:0005829">
    <property type="term" value="C:cytosol"/>
    <property type="evidence" value="ECO:0000304"/>
    <property type="project" value="Reactome"/>
</dbReference>
<dbReference type="GO" id="GO:0022625">
    <property type="term" value="C:cytosolic large ribosomal subunit"/>
    <property type="evidence" value="ECO:0000314"/>
    <property type="project" value="UniProtKB"/>
</dbReference>
<dbReference type="GO" id="GO:0005783">
    <property type="term" value="C:endoplasmic reticulum"/>
    <property type="evidence" value="ECO:0007669"/>
    <property type="project" value="Ensembl"/>
</dbReference>
<dbReference type="GO" id="GO:0005634">
    <property type="term" value="C:nucleus"/>
    <property type="evidence" value="ECO:0007669"/>
    <property type="project" value="Ensembl"/>
</dbReference>
<dbReference type="GO" id="GO:0005840">
    <property type="term" value="C:ribosome"/>
    <property type="evidence" value="ECO:0000250"/>
    <property type="project" value="UniProtKB"/>
</dbReference>
<dbReference type="GO" id="GO:0003735">
    <property type="term" value="F:structural constituent of ribosome"/>
    <property type="evidence" value="ECO:0000314"/>
    <property type="project" value="UniProtKB"/>
</dbReference>
<dbReference type="GO" id="GO:0030154">
    <property type="term" value="P:cell differentiation"/>
    <property type="evidence" value="ECO:0007669"/>
    <property type="project" value="UniProtKB-KW"/>
</dbReference>
<dbReference type="GO" id="GO:0007141">
    <property type="term" value="P:male meiosis I"/>
    <property type="evidence" value="ECO:0000315"/>
    <property type="project" value="UniProtKB"/>
</dbReference>
<dbReference type="GO" id="GO:0000027">
    <property type="term" value="P:ribosomal large subunit assembly"/>
    <property type="evidence" value="ECO:0000315"/>
    <property type="project" value="UniProtKB"/>
</dbReference>
<dbReference type="GO" id="GO:0007283">
    <property type="term" value="P:spermatogenesis"/>
    <property type="evidence" value="ECO:0000315"/>
    <property type="project" value="UniProtKB"/>
</dbReference>
<dbReference type="GO" id="GO:0006412">
    <property type="term" value="P:translation"/>
    <property type="evidence" value="ECO:0007669"/>
    <property type="project" value="InterPro"/>
</dbReference>
<dbReference type="CDD" id="cd01433">
    <property type="entry name" value="Ribosomal_L16_L10e"/>
    <property type="match status" value="1"/>
</dbReference>
<dbReference type="FunFam" id="3.30.60.300:FF:000001">
    <property type="entry name" value="60S ribosomal protein L10"/>
    <property type="match status" value="1"/>
</dbReference>
<dbReference type="FunFam" id="3.90.1170.10:FF:000002">
    <property type="entry name" value="60S ribosomal protein L10"/>
    <property type="match status" value="1"/>
</dbReference>
<dbReference type="Gene3D" id="3.30.60.300">
    <property type="match status" value="1"/>
</dbReference>
<dbReference type="Gene3D" id="3.90.1170.10">
    <property type="entry name" value="Ribosomal protein L10e/L16"/>
    <property type="match status" value="1"/>
</dbReference>
<dbReference type="InterPro" id="IPR047873">
    <property type="entry name" value="Ribosomal_uL16"/>
</dbReference>
<dbReference type="InterPro" id="IPR018255">
    <property type="entry name" value="Ribosomal_uL16_CS_euk_arc"/>
</dbReference>
<dbReference type="InterPro" id="IPR016180">
    <property type="entry name" value="Ribosomal_uL16_dom"/>
</dbReference>
<dbReference type="InterPro" id="IPR001197">
    <property type="entry name" value="Ribosomal_uL16_euk_arch"/>
</dbReference>
<dbReference type="InterPro" id="IPR036920">
    <property type="entry name" value="Ribosomal_uL16_sf"/>
</dbReference>
<dbReference type="NCBIfam" id="NF003239">
    <property type="entry name" value="PRK04199.1-4"/>
    <property type="match status" value="1"/>
</dbReference>
<dbReference type="NCBIfam" id="TIGR00279">
    <property type="entry name" value="uL16_euk_arch"/>
    <property type="match status" value="1"/>
</dbReference>
<dbReference type="PANTHER" id="PTHR11726">
    <property type="entry name" value="60S RIBOSOMAL PROTEIN L10"/>
    <property type="match status" value="1"/>
</dbReference>
<dbReference type="Pfam" id="PF00252">
    <property type="entry name" value="Ribosomal_L16"/>
    <property type="match status" value="1"/>
</dbReference>
<dbReference type="PIRSF" id="PIRSF005590">
    <property type="entry name" value="Ribosomal_L10"/>
    <property type="match status" value="1"/>
</dbReference>
<dbReference type="SUPFAM" id="SSF54686">
    <property type="entry name" value="Ribosomal protein L16p/L10e"/>
    <property type="match status" value="1"/>
</dbReference>
<dbReference type="PROSITE" id="PS01257">
    <property type="entry name" value="RIBOSOMAL_L10E"/>
    <property type="match status" value="1"/>
</dbReference>
<evidence type="ECO:0000269" key="1">
    <source>
    </source>
</evidence>
<evidence type="ECO:0000269" key="2">
    <source>
    </source>
</evidence>
<evidence type="ECO:0000269" key="3">
    <source>
    </source>
</evidence>
<evidence type="ECO:0000303" key="4">
    <source>
    </source>
</evidence>
<evidence type="ECO:0000305" key="5"/>
<evidence type="ECO:0000305" key="6">
    <source>
    </source>
</evidence>
<evidence type="ECO:0000312" key="7">
    <source>
        <dbReference type="MGI" id="MGI:3647985"/>
    </source>
</evidence>
<evidence type="ECO:0007744" key="8">
    <source>
        <dbReference type="PDB" id="7CPV"/>
    </source>
</evidence>
<sequence>MGRRPARCYRYCKNKPYPKSRFCRGVPDAKIRIFDLGRKKAKVDEFPLCGHMVSDEYEQLSSEALEAARICANKYMVKSCGKDGFHIRVRLHPFHVIRINKMLSCAGADRLQTGMRGAFGKPQGTVARVHIGQVIMSIRTKLQNKEHVIEALRRAKFKFPGRQKIHISKKWGFTKFNADEFEDKVAAKRLIPDGCGVKYIPERGPLDKWRALHS</sequence>
<gene>
    <name evidence="4 7" type="primary">Rpl10l</name>
</gene>
<comment type="function">
    <text evidence="2 3">Testis-specific component of the ribosome, which is required for the transition from prophase to metaphase in male meiosis I (PubMed:28502657). Compensates for the inactivated X-linked RPL10 paralog during spermatogenesis (PubMed:28502657). The ribosome is a large ribonucleoprotein complex responsible for the synthesis of proteins in the cell (PubMed:28502657). The male germ cell-specific ribosome displays a ribosomal polypeptide exit tunnel of distinct size and charge states compared with the classical ribosome (PubMed:36517592). It is responsible for regulating the biosynthesis and folding of a subset of male germ-cell-specific proteins that are essential for the formation of sperm (PubMed:36517592).</text>
</comment>
<comment type="subunit">
    <text evidence="2 3">Component of a male germ cell-specific 60S large ribosomal subunit (LSU), which contains RPL10L and RPL39L, instead of RPL10 and RPL39 paralogs (PubMed:28502657, PubMed:36517592). The composition of the rest of the complex is similar to classical ribosomes (PubMed:36517592).</text>
</comment>
<comment type="subcellular location">
    <subcellularLocation>
        <location evidence="6">Cytoplasm</location>
    </subcellularLocation>
</comment>
<comment type="tissue specificity">
    <text evidence="2">Testis-specific.</text>
</comment>
<comment type="disruption phenotype">
    <text evidence="2">Spermatogenic failure and male infertility (PubMed:28502657). Spermatocytes show defects in the transition from prophase to metaphase of meiosis I due to impaired ribosome biogenesis in late prophase spermatocytes (PubMed:28502657).</text>
</comment>
<comment type="similarity">
    <text evidence="5">Belongs to the universal ribosomal protein uL16 family.</text>
</comment>
<keyword id="KW-0002">3D-structure</keyword>
<keyword id="KW-0963">Cytoplasm</keyword>
<keyword id="KW-0221">Differentiation</keyword>
<keyword id="KW-0469">Meiosis</keyword>
<keyword id="KW-1185">Reference proteome</keyword>
<keyword id="KW-0687">Ribonucleoprotein</keyword>
<keyword id="KW-0689">Ribosomal protein</keyword>
<keyword id="KW-0744">Spermatogenesis</keyword>
<organism>
    <name type="scientific">Mus musculus</name>
    <name type="common">Mouse</name>
    <dbReference type="NCBI Taxonomy" id="10090"/>
    <lineage>
        <taxon>Eukaryota</taxon>
        <taxon>Metazoa</taxon>
        <taxon>Chordata</taxon>
        <taxon>Craniata</taxon>
        <taxon>Vertebrata</taxon>
        <taxon>Euteleostomi</taxon>
        <taxon>Mammalia</taxon>
        <taxon>Eutheria</taxon>
        <taxon>Euarchontoglires</taxon>
        <taxon>Glires</taxon>
        <taxon>Rodentia</taxon>
        <taxon>Myomorpha</taxon>
        <taxon>Muroidea</taxon>
        <taxon>Muridae</taxon>
        <taxon>Murinae</taxon>
        <taxon>Mus</taxon>
        <taxon>Mus</taxon>
    </lineage>
</organism>
<protein>
    <recommendedName>
        <fullName evidence="5">Large ribosomal subunit protein uL16-like</fullName>
    </recommendedName>
    <alternativeName>
        <fullName evidence="4">60S ribosomal protein L10-like</fullName>
    </alternativeName>
</protein>
<reference key="1">
    <citation type="journal article" date="2009" name="PLoS Biol.">
        <title>Lineage-specific biology revealed by a finished genome assembly of the mouse.</title>
        <authorList>
            <person name="Church D.M."/>
            <person name="Goodstadt L."/>
            <person name="Hillier L.W."/>
            <person name="Zody M.C."/>
            <person name="Goldstein S."/>
            <person name="She X."/>
            <person name="Bult C.J."/>
            <person name="Agarwala R."/>
            <person name="Cherry J.L."/>
            <person name="DiCuccio M."/>
            <person name="Hlavina W."/>
            <person name="Kapustin Y."/>
            <person name="Meric P."/>
            <person name="Maglott D."/>
            <person name="Birtle Z."/>
            <person name="Marques A.C."/>
            <person name="Graves T."/>
            <person name="Zhou S."/>
            <person name="Teague B."/>
            <person name="Potamousis K."/>
            <person name="Churas C."/>
            <person name="Place M."/>
            <person name="Herschleb J."/>
            <person name="Runnheim R."/>
            <person name="Forrest D."/>
            <person name="Amos-Landgraf J."/>
            <person name="Schwartz D.C."/>
            <person name="Cheng Z."/>
            <person name="Lindblad-Toh K."/>
            <person name="Eichler E.E."/>
            <person name="Ponting C.P."/>
        </authorList>
    </citation>
    <scope>NUCLEOTIDE SEQUENCE [LARGE SCALE GENOMIC DNA]</scope>
    <source>
        <strain>C57BL/6J</strain>
    </source>
</reference>
<reference evidence="5" key="2">
    <citation type="journal article" date="2004" name="Genome Res.">
        <title>The status, quality, and expansion of the NIH full-length cDNA project: the Mammalian Gene Collection (MGC).</title>
        <authorList>
            <consortium name="The MGC Project Team"/>
        </authorList>
    </citation>
    <scope>NUCLEOTIDE SEQUENCE [LARGE SCALE MRNA]</scope>
    <source>
        <tissue evidence="1">Testis</tissue>
    </source>
</reference>
<reference key="3">
    <citation type="journal article" date="2017" name="Curr. Biol.">
        <title>RPL10L is required for male meiotic division by compensating for RPL10 during meiotic sex chromosome inactivation in mice.</title>
        <authorList>
            <person name="Jiang L."/>
            <person name="Li T."/>
            <person name="Zhang X."/>
            <person name="Zhang B."/>
            <person name="Yu C."/>
            <person name="Li Y."/>
            <person name="Fan S."/>
            <person name="Jiang X."/>
            <person name="Khan T."/>
            <person name="Hao Q."/>
            <person name="Xu P."/>
            <person name="Nadano D."/>
            <person name="Huleihel M."/>
            <person name="Lunenfeld E."/>
            <person name="Wang P.J."/>
            <person name="Zhang Y."/>
            <person name="Shi Q."/>
        </authorList>
    </citation>
    <scope>FUNCTION</scope>
    <scope>TISSUE SPECIFICITY</scope>
    <scope>DISRUPTION PHENOTYPE</scope>
</reference>
<reference evidence="8" key="4">
    <citation type="journal article" date="2022" name="Nature">
        <title>A male germ-cell-specific ribosome controls male fertility.</title>
        <authorList>
            <person name="Li H."/>
            <person name="Huo Y."/>
            <person name="He X."/>
            <person name="Yao L."/>
            <person name="Zhang H."/>
            <person name="Cui Y."/>
            <person name="Xiao H."/>
            <person name="Xie W."/>
            <person name="Zhang D."/>
            <person name="Wang Y."/>
            <person name="Zhang S."/>
            <person name="Tu H."/>
            <person name="Cheng Y."/>
            <person name="Guo Y."/>
            <person name="Cao X."/>
            <person name="Zhu Y."/>
            <person name="Jiang T."/>
            <person name="Guo X."/>
            <person name="Qin Y."/>
            <person name="Sha J."/>
        </authorList>
    </citation>
    <scope>STRUCTURE BY ELECTRON MICROSCOPY (3.03 ANGSTROMS) IN COMPLEX WITH TESTIS-SPECIFIC RIBOSOME</scope>
    <scope>FUNCTION</scope>
    <scope>SUBUNIT</scope>
    <scope>SUBCELLULAR LOCATION</scope>
</reference>
<proteinExistence type="evidence at protein level"/>
<accession>P86048</accession>
<name>RL10L_MOUSE</name>